<accession>P15819</accession>
<proteinExistence type="evidence at protein level"/>
<comment type="function">
    <text evidence="1 3 5">One of the components of the core complex of photosystem II (PSII). PSII is a light-driven water:plastoquinone oxidoreductase that uses light energy to abstract electrons from H(2)O, generating O(2) and a proton gradient subsequently used for ATP formation. It consists of a core antenna complex that captures photons, and an electron transfer chain that converts photonic excitation into a charge separation.</text>
</comment>
<comment type="subunit">
    <text evidence="1 2 3 5">PSII is composed of 1 copy each of membrane proteins PsbA, PsbB, PsbC, PsbD, PsbE, PsbF, PsbH, PsbI, PsbJ, PsbK, PsbL, PsbM, PsbT, PsbX, PsbY, PsbZ, Psb30/Ycf12, peripheral proteins PsbO, CyanoQ (PsbQ), PsbU, PsbV and a large number of cofactors. It forms dimeric complexes.</text>
</comment>
<comment type="subcellular location">
    <subcellularLocation>
        <location evidence="1 2 3 5">Cellular thylakoid membrane</location>
        <topology evidence="1 5">Single-pass membrane protein</topology>
    </subcellularLocation>
</comment>
<comment type="disruption phenotype">
    <text evidence="3 4">Grows more slowly than wild-type both heteroautotrophically and photoautotrophically, approximately wild-type amounts of PSII assemble.</text>
</comment>
<comment type="similarity">
    <text evidence="1">Belongs to the PsbK family.</text>
</comment>
<gene>
    <name evidence="1" type="primary">psbK</name>
    <name type="ordered locus">sml0005</name>
</gene>
<protein>
    <recommendedName>
        <fullName evidence="1">Photosystem II reaction center protein K</fullName>
        <shortName evidence="1">PSII-K</shortName>
    </recommendedName>
</protein>
<reference key="1">
    <citation type="journal article" date="1990" name="Nucleic Acids Res.">
        <title>Nucleotide sequence of the psbK gene of the cyanobacterium Synechocystis 6803.</title>
        <authorList>
            <person name="Zhang Z.H."/>
            <person name="Mayes S.R."/>
            <person name="Barber J."/>
        </authorList>
    </citation>
    <scope>NUCLEOTIDE SEQUENCE [GENOMIC DNA]</scope>
    <source>
        <strain>ATCC 27184 / PCC 6803 / N-1</strain>
    </source>
</reference>
<reference key="2">
    <citation type="journal article" date="1991" name="J. Biol. Chem.">
        <title>Cloning of the psbK gene from Synechocystis sp. PCC 6803 and characterization of photosystem II in mutants lacking PSII-K.</title>
        <authorList>
            <person name="Ikeuchi M."/>
            <person name="Eggers B."/>
            <person name="Shen G."/>
            <person name="Webber A."/>
            <person name="Yu J."/>
            <person name="Hirano A."/>
            <person name="Inoue Y."/>
            <person name="Vermaas W."/>
        </authorList>
    </citation>
    <scope>NUCLEOTIDE SEQUENCE [GENOMIC DNA]</scope>
    <scope>PROTEIN SEQUENCE OF 9-23</scope>
    <scope>FUNCTION</scope>
    <scope>SUBUNIT</scope>
    <scope>SUBCELLULAR LOCATION</scope>
    <scope>DISRUPTION PHENOTYPE</scope>
    <source>
        <strain>ATCC 27184 / PCC 6803 / N-1</strain>
    </source>
</reference>
<reference key="3">
    <citation type="journal article" date="1996" name="DNA Res.">
        <title>Sequence analysis of the genome of the unicellular cyanobacterium Synechocystis sp. strain PCC6803. II. Sequence determination of the entire genome and assignment of potential protein-coding regions.</title>
        <authorList>
            <person name="Kaneko T."/>
            <person name="Sato S."/>
            <person name="Kotani H."/>
            <person name="Tanaka A."/>
            <person name="Asamizu E."/>
            <person name="Nakamura Y."/>
            <person name="Miyajima N."/>
            <person name="Hirosawa M."/>
            <person name="Sugiura M."/>
            <person name="Sasamoto S."/>
            <person name="Kimura T."/>
            <person name="Hosouchi T."/>
            <person name="Matsuno A."/>
            <person name="Muraki A."/>
            <person name="Nakazaki N."/>
            <person name="Naruo K."/>
            <person name="Okumura S."/>
            <person name="Shimpo S."/>
            <person name="Takeuchi C."/>
            <person name="Wada T."/>
            <person name="Watanabe A."/>
            <person name="Yamada M."/>
            <person name="Yasuda M."/>
            <person name="Tabata S."/>
        </authorList>
    </citation>
    <scope>NUCLEOTIDE SEQUENCE [LARGE SCALE GENOMIC DNA]</scope>
    <source>
        <strain>ATCC 27184 / PCC 6803 / Kazusa</strain>
    </source>
</reference>
<reference key="4">
    <citation type="journal article" date="2002" name="Biochemistry">
        <title>Proteomic analysis of a highly active photosystem II preparation from the cyanobacterium Synechocystis sp. PCC 6803 reveals the presence of novel polypeptides.</title>
        <authorList>
            <person name="Kashino Y."/>
            <person name="Lauber W.M."/>
            <person name="Carroll J.A."/>
            <person name="Wang Q."/>
            <person name="Whitmarsh J."/>
            <person name="Satoh K."/>
            <person name="Pakrasi H.B."/>
        </authorList>
    </citation>
    <scope>PROTEIN SEQUENCE OF 9-23</scope>
    <scope>SUBUNIT</scope>
    <scope>SUBCELLULAR LOCATION</scope>
    <source>
        <strain>ATCC 27184 / PCC 6803 / Kazusa</strain>
    </source>
</reference>
<reference key="5">
    <citation type="journal article" date="1993" name="Photosyn. Res.">
        <title>Characterization of the psbK locus of Synechocystis sp. PCC 6803 in terms of Photosystem II function.</title>
        <authorList>
            <person name="Zhang Z.H."/>
            <person name="Mayes S.R."/>
            <person name="Vass I."/>
            <person name="Nagy L."/>
            <person name="Barber J."/>
        </authorList>
    </citation>
    <scope>DISRUPTION PHENOTYPE</scope>
    <source>
        <strain>ATCC 27184 / PCC 6803 / N-1</strain>
    </source>
</reference>
<reference evidence="7 8" key="6">
    <citation type="journal article" date="2022" name="Proc. Natl. Acad. Sci. U.S.A.">
        <title>High-resolution cryo-electron microscopy structure of photosystem II from the mesophilic cyanobacterium, Synechocystis sp. PCC 6803.</title>
        <authorList>
            <person name="Gisriel C.J."/>
            <person name="Wang J."/>
            <person name="Liu J."/>
            <person name="Flesher D.A."/>
            <person name="Reiss K.M."/>
            <person name="Huang H.L."/>
            <person name="Yang K.R."/>
            <person name="Armstrong W.H."/>
            <person name="Gunner M.R."/>
            <person name="Batista V.S."/>
            <person name="Debus R.J."/>
            <person name="Brudvig G.W."/>
        </authorList>
    </citation>
    <scope>STRUCTURE BY ELECTRON MICROSCOPY (1.93 ANGSTROMS) OF 9-45</scope>
    <scope>FUNCTION</scope>
    <scope>SUBUNIT</scope>
    <scope>SUBCELLULAR LOCATION</scope>
    <source>
        <strain>ATCC 27184 / PCC 6803 / Kazusa</strain>
    </source>
</reference>
<feature type="propeptide" id="PRO_0000029551" evidence="1 2 3">
    <location>
        <begin position="1"/>
        <end position="8"/>
    </location>
</feature>
<feature type="chain" id="PRO_0000029552" description="Photosystem II reaction center protein K" evidence="1">
    <location>
        <begin position="9"/>
        <end position="45"/>
    </location>
</feature>
<feature type="transmembrane region" description="Helical" evidence="5 6">
    <location>
        <begin position="16"/>
        <end position="40"/>
    </location>
</feature>
<feature type="helix" evidence="9">
    <location>
        <begin position="12"/>
        <end position="14"/>
    </location>
</feature>
<feature type="helix" evidence="9">
    <location>
        <begin position="18"/>
        <end position="21"/>
    </location>
</feature>
<feature type="helix" evidence="9">
    <location>
        <begin position="24"/>
        <end position="26"/>
    </location>
</feature>
<feature type="helix" evidence="9">
    <location>
        <begin position="27"/>
        <end position="41"/>
    </location>
</feature>
<feature type="turn" evidence="9">
    <location>
        <begin position="42"/>
        <end position="44"/>
    </location>
</feature>
<sequence>METIYLLAKLPEAYQIFDPLVDVLPVIPLFFLALAFVWQAAVGFK</sequence>
<evidence type="ECO:0000255" key="1">
    <source>
        <dbReference type="HAMAP-Rule" id="MF_00441"/>
    </source>
</evidence>
<evidence type="ECO:0000269" key="2">
    <source>
    </source>
</evidence>
<evidence type="ECO:0000269" key="3">
    <source>
    </source>
</evidence>
<evidence type="ECO:0000269" key="4">
    <source>
    </source>
</evidence>
<evidence type="ECO:0000269" key="5">
    <source>
    </source>
</evidence>
<evidence type="ECO:0000312" key="6">
    <source>
        <dbReference type="PDB" id="7N8O"/>
    </source>
</evidence>
<evidence type="ECO:0007744" key="7">
    <source>
        <dbReference type="PDB" id="7N8O"/>
    </source>
</evidence>
<evidence type="ECO:0007744" key="8">
    <source>
        <dbReference type="PDB" id="7RCV"/>
    </source>
</evidence>
<evidence type="ECO:0007829" key="9">
    <source>
        <dbReference type="PDB" id="7N8O"/>
    </source>
</evidence>
<dbReference type="EMBL" id="M74841">
    <property type="protein sequence ID" value="AAA27298.1"/>
    <property type="molecule type" value="Genomic_DNA"/>
</dbReference>
<dbReference type="EMBL" id="X51588">
    <property type="protein sequence ID" value="CAA35938.1"/>
    <property type="molecule type" value="Genomic_DNA"/>
</dbReference>
<dbReference type="EMBL" id="BA000022">
    <property type="protein sequence ID" value="BAA17075.1"/>
    <property type="molecule type" value="Genomic_DNA"/>
</dbReference>
<dbReference type="PIR" id="S14917">
    <property type="entry name" value="F2YB2K"/>
</dbReference>
<dbReference type="PDB" id="6WJ6">
    <property type="method" value="EM"/>
    <property type="resolution" value="2.58 A"/>
    <property type="chains" value="K=1-45"/>
</dbReference>
<dbReference type="PDB" id="7N8O">
    <property type="method" value="EM"/>
    <property type="resolution" value="1.93 A"/>
    <property type="chains" value="K/k=9-45"/>
</dbReference>
<dbReference type="PDB" id="7RCV">
    <property type="method" value="EM"/>
    <property type="resolution" value="2.01 A"/>
    <property type="chains" value="K/k=9-45"/>
</dbReference>
<dbReference type="PDB" id="8TOW">
    <property type="method" value="EM"/>
    <property type="resolution" value="2.14 A"/>
    <property type="chains" value="K/k=1-45"/>
</dbReference>
<dbReference type="PDB" id="9EH5">
    <property type="method" value="EM"/>
    <property type="resolution" value="1.97 A"/>
    <property type="chains" value="K/k=1-45"/>
</dbReference>
<dbReference type="PDBsum" id="6WJ6"/>
<dbReference type="PDBsum" id="7N8O"/>
<dbReference type="PDBsum" id="7RCV"/>
<dbReference type="PDBsum" id="8TOW"/>
<dbReference type="PDBsum" id="9EH5"/>
<dbReference type="EMDB" id="EMD-21690"/>
<dbReference type="EMDB" id="EMD-24239"/>
<dbReference type="EMDB" id="EMD-24407"/>
<dbReference type="EMDB" id="EMD-41460"/>
<dbReference type="EMDB" id="EMD-48046"/>
<dbReference type="SMR" id="P15819"/>
<dbReference type="IntAct" id="P15819">
    <property type="interactions" value="2"/>
</dbReference>
<dbReference type="STRING" id="1148.gene:10497936"/>
<dbReference type="PaxDb" id="1148-1652151"/>
<dbReference type="EnsemblBacteria" id="BAA17075">
    <property type="protein sequence ID" value="BAA17075"/>
    <property type="gene ID" value="BAA17075"/>
</dbReference>
<dbReference type="KEGG" id="syn:sml0005"/>
<dbReference type="eggNOG" id="ENOG5032YQR">
    <property type="taxonomic scope" value="Bacteria"/>
</dbReference>
<dbReference type="InParanoid" id="P15819"/>
<dbReference type="BioCyc" id="MetaCyc:PSBK-MONOMER"/>
<dbReference type="Proteomes" id="UP000001425">
    <property type="component" value="Chromosome"/>
</dbReference>
<dbReference type="GO" id="GO:0009539">
    <property type="term" value="C:photosystem II reaction center"/>
    <property type="evidence" value="ECO:0007669"/>
    <property type="project" value="InterPro"/>
</dbReference>
<dbReference type="GO" id="GO:0031676">
    <property type="term" value="C:plasma membrane-derived thylakoid membrane"/>
    <property type="evidence" value="ECO:0007669"/>
    <property type="project" value="UniProtKB-SubCell"/>
</dbReference>
<dbReference type="GO" id="GO:0030096">
    <property type="term" value="C:plasma membrane-derived thylakoid photosystem II"/>
    <property type="evidence" value="ECO:0000314"/>
    <property type="project" value="UniProtKB"/>
</dbReference>
<dbReference type="GO" id="GO:0015979">
    <property type="term" value="P:photosynthesis"/>
    <property type="evidence" value="ECO:0007669"/>
    <property type="project" value="UniProtKB-UniRule"/>
</dbReference>
<dbReference type="HAMAP" id="MF_00441">
    <property type="entry name" value="PSII_PsbK"/>
    <property type="match status" value="1"/>
</dbReference>
<dbReference type="InterPro" id="IPR003687">
    <property type="entry name" value="PSII_PsbK"/>
</dbReference>
<dbReference type="InterPro" id="IPR037270">
    <property type="entry name" value="PSII_PsbK_sf"/>
</dbReference>
<dbReference type="NCBIfam" id="NF002715">
    <property type="entry name" value="PRK02553.1"/>
    <property type="match status" value="1"/>
</dbReference>
<dbReference type="PANTHER" id="PTHR35325">
    <property type="match status" value="1"/>
</dbReference>
<dbReference type="PANTHER" id="PTHR35325:SF1">
    <property type="entry name" value="PHOTOSYSTEM II REACTION CENTER PROTEIN K"/>
    <property type="match status" value="1"/>
</dbReference>
<dbReference type="Pfam" id="PF02533">
    <property type="entry name" value="PsbK"/>
    <property type="match status" value="1"/>
</dbReference>
<dbReference type="SUPFAM" id="SSF161037">
    <property type="entry name" value="Photosystem II reaction center protein K, PsbK"/>
    <property type="match status" value="1"/>
</dbReference>
<organism>
    <name type="scientific">Synechocystis sp. (strain ATCC 27184 / PCC 6803 / Kazusa)</name>
    <dbReference type="NCBI Taxonomy" id="1111708"/>
    <lineage>
        <taxon>Bacteria</taxon>
        <taxon>Bacillati</taxon>
        <taxon>Cyanobacteriota</taxon>
        <taxon>Cyanophyceae</taxon>
        <taxon>Synechococcales</taxon>
        <taxon>Merismopediaceae</taxon>
        <taxon>Synechocystis</taxon>
    </lineage>
</organism>
<name>PSBK_SYNY3</name>
<keyword id="KW-0002">3D-structure</keyword>
<keyword id="KW-0903">Direct protein sequencing</keyword>
<keyword id="KW-0472">Membrane</keyword>
<keyword id="KW-0602">Photosynthesis</keyword>
<keyword id="KW-0604">Photosystem II</keyword>
<keyword id="KW-0674">Reaction center</keyword>
<keyword id="KW-1185">Reference proteome</keyword>
<keyword id="KW-0793">Thylakoid</keyword>
<keyword id="KW-0812">Transmembrane</keyword>
<keyword id="KW-1133">Transmembrane helix</keyword>